<gene>
    <name type="primary">TVP23</name>
    <name type="ORF">Kpol_1055p39</name>
</gene>
<protein>
    <recommendedName>
        <fullName>Golgi apparatus membrane protein TVP23</fullName>
    </recommendedName>
</protein>
<sequence length="197" mass="22536">MEQINNFYSTILKSSHPFLLSIHLGGKAVPLIFYVLGSLFMGFTAQFISVVLLLAFDFYITKNISGRKLVQLRWWYDTTGKQSSSFTFESYKQFSPGPSINPIDSKLFWWSIYLTPIVWIVFGIMCILRLKLFYFLLVSVGICLTGINAYGFRSCDKWEPNANEDSNNSWFQLPTIPGLDNLNALSQVQSFFQSRSG</sequence>
<reference key="1">
    <citation type="journal article" date="2007" name="Proc. Natl. Acad. Sci. U.S.A.">
        <title>Independent sorting-out of thousands of duplicated gene pairs in two yeast species descended from a whole-genome duplication.</title>
        <authorList>
            <person name="Scannell D.R."/>
            <person name="Frank A.C."/>
            <person name="Conant G.C."/>
            <person name="Byrne K.P."/>
            <person name="Woolfit M."/>
            <person name="Wolfe K.H."/>
        </authorList>
    </citation>
    <scope>NUCLEOTIDE SEQUENCE [LARGE SCALE GENOMIC DNA]</scope>
    <source>
        <strain>ATCC 22028 / DSM 70294 / BCRC 21397 / CBS 2163 / NBRC 10782 / NRRL Y-8283 / UCD 57-17</strain>
    </source>
</reference>
<evidence type="ECO:0000250" key="1"/>
<evidence type="ECO:0000255" key="2"/>
<evidence type="ECO:0000305" key="3"/>
<comment type="function">
    <text evidence="1">Golgi membrane protein involved in vesicular trafficking.</text>
</comment>
<comment type="subcellular location">
    <subcellularLocation>
        <location evidence="1">Golgi apparatus membrane</location>
        <topology evidence="1">Multi-pass membrane protein</topology>
    </subcellularLocation>
</comment>
<comment type="similarity">
    <text evidence="3">Belongs to the TVP23 family.</text>
</comment>
<feature type="chain" id="PRO_0000343056" description="Golgi apparatus membrane protein TVP23">
    <location>
        <begin position="1"/>
        <end position="197"/>
    </location>
</feature>
<feature type="transmembrane region" description="Helical" evidence="2">
    <location>
        <begin position="15"/>
        <end position="35"/>
    </location>
</feature>
<feature type="transmembrane region" description="Helical" evidence="2">
    <location>
        <begin position="36"/>
        <end position="56"/>
    </location>
</feature>
<feature type="transmembrane region" description="Helical" evidence="2">
    <location>
        <begin position="107"/>
        <end position="127"/>
    </location>
</feature>
<feature type="transmembrane region" description="Helical" evidence="2">
    <location>
        <begin position="132"/>
        <end position="152"/>
    </location>
</feature>
<feature type="glycosylation site" description="N-linked (GlcNAc...) asparagine" evidence="2">
    <location>
        <position position="63"/>
    </location>
</feature>
<feature type="glycosylation site" description="N-linked (GlcNAc...) asparagine" evidence="2">
    <location>
        <position position="167"/>
    </location>
</feature>
<keyword id="KW-0325">Glycoprotein</keyword>
<keyword id="KW-0333">Golgi apparatus</keyword>
<keyword id="KW-0472">Membrane</keyword>
<keyword id="KW-1185">Reference proteome</keyword>
<keyword id="KW-0812">Transmembrane</keyword>
<keyword id="KW-1133">Transmembrane helix</keyword>
<organism>
    <name type="scientific">Vanderwaltozyma polyspora (strain ATCC 22028 / DSM 70294 / BCRC 21397 / CBS 2163 / NBRC 10782 / NRRL Y-8283 / UCD 57-17)</name>
    <name type="common">Kluyveromyces polysporus</name>
    <dbReference type="NCBI Taxonomy" id="436907"/>
    <lineage>
        <taxon>Eukaryota</taxon>
        <taxon>Fungi</taxon>
        <taxon>Dikarya</taxon>
        <taxon>Ascomycota</taxon>
        <taxon>Saccharomycotina</taxon>
        <taxon>Saccharomycetes</taxon>
        <taxon>Saccharomycetales</taxon>
        <taxon>Saccharomycetaceae</taxon>
        <taxon>Vanderwaltozyma</taxon>
    </lineage>
</organism>
<name>TVP23_VANPO</name>
<dbReference type="EMBL" id="DS480386">
    <property type="protein sequence ID" value="EDO18684.1"/>
    <property type="molecule type" value="Genomic_DNA"/>
</dbReference>
<dbReference type="RefSeq" id="XP_001646542.1">
    <property type="nucleotide sequence ID" value="XM_001646492.1"/>
</dbReference>
<dbReference type="FunCoup" id="A7TGB4">
    <property type="interactions" value="413"/>
</dbReference>
<dbReference type="STRING" id="436907.A7TGB4"/>
<dbReference type="GlyCosmos" id="A7TGB4">
    <property type="glycosylation" value="2 sites, No reported glycans"/>
</dbReference>
<dbReference type="GeneID" id="5546989"/>
<dbReference type="KEGG" id="vpo:Kpol_1055p39"/>
<dbReference type="eggNOG" id="KOG3195">
    <property type="taxonomic scope" value="Eukaryota"/>
</dbReference>
<dbReference type="HOGENOM" id="CLU_1190470_0_0_1"/>
<dbReference type="InParanoid" id="A7TGB4"/>
<dbReference type="OMA" id="KMIWWID"/>
<dbReference type="OrthoDB" id="2151161at2759"/>
<dbReference type="PhylomeDB" id="A7TGB4"/>
<dbReference type="Proteomes" id="UP000000267">
    <property type="component" value="Unassembled WGS sequence"/>
</dbReference>
<dbReference type="GO" id="GO:0000139">
    <property type="term" value="C:Golgi membrane"/>
    <property type="evidence" value="ECO:0007669"/>
    <property type="project" value="UniProtKB-SubCell"/>
</dbReference>
<dbReference type="GO" id="GO:0009306">
    <property type="term" value="P:protein secretion"/>
    <property type="evidence" value="ECO:0007669"/>
    <property type="project" value="TreeGrafter"/>
</dbReference>
<dbReference type="GO" id="GO:0016192">
    <property type="term" value="P:vesicle-mediated transport"/>
    <property type="evidence" value="ECO:0007669"/>
    <property type="project" value="EnsemblFungi"/>
</dbReference>
<dbReference type="InterPro" id="IPR008564">
    <property type="entry name" value="TVP23-like"/>
</dbReference>
<dbReference type="PANTHER" id="PTHR13019">
    <property type="entry name" value="GOLGI APPARATUS MEMBRANE PROTEIN TVP23"/>
    <property type="match status" value="1"/>
</dbReference>
<dbReference type="PANTHER" id="PTHR13019:SF7">
    <property type="entry name" value="GOLGI APPARATUS MEMBRANE PROTEIN TVP23"/>
    <property type="match status" value="1"/>
</dbReference>
<dbReference type="Pfam" id="PF05832">
    <property type="entry name" value="DUF846"/>
    <property type="match status" value="1"/>
</dbReference>
<proteinExistence type="inferred from homology"/>
<accession>A7TGB4</accession>